<dbReference type="EMBL" id="BX537162">
    <property type="protein sequence ID" value="CAK11284.1"/>
    <property type="molecule type" value="Genomic_DNA"/>
</dbReference>
<dbReference type="EMBL" id="BC076060">
    <property type="protein sequence ID" value="AAH76060.1"/>
    <property type="molecule type" value="mRNA"/>
</dbReference>
<dbReference type="RefSeq" id="NP_001003444.1">
    <property type="nucleotide sequence ID" value="NM_001003444.1"/>
</dbReference>
<dbReference type="SMR" id="Q6DHB5"/>
<dbReference type="FunCoup" id="Q6DHB5">
    <property type="interactions" value="170"/>
</dbReference>
<dbReference type="STRING" id="7955.ENSDARP00000038316"/>
<dbReference type="PaxDb" id="7955-ENSDARP00000038316"/>
<dbReference type="Ensembl" id="ENSDART00000039277">
    <property type="protein sequence ID" value="ENSDARP00000038316"/>
    <property type="gene ID" value="ENSDARG00000021595"/>
</dbReference>
<dbReference type="GeneID" id="445050"/>
<dbReference type="KEGG" id="dre:445050"/>
<dbReference type="AGR" id="ZFIN:ZDB-GENE-040801-180"/>
<dbReference type="CTD" id="375612"/>
<dbReference type="ZFIN" id="ZDB-GENE-040801-180">
    <property type="gene designation" value="lhfpl3"/>
</dbReference>
<dbReference type="eggNOG" id="KOG4026">
    <property type="taxonomic scope" value="Eukaryota"/>
</dbReference>
<dbReference type="HOGENOM" id="CLU_084868_1_2_1"/>
<dbReference type="InParanoid" id="Q6DHB5"/>
<dbReference type="OMA" id="YQTNYIR"/>
<dbReference type="OrthoDB" id="5873721at2759"/>
<dbReference type="PhylomeDB" id="Q6DHB5"/>
<dbReference type="TreeFam" id="TF321143"/>
<dbReference type="PRO" id="PR:Q6DHB5"/>
<dbReference type="Proteomes" id="UP000000437">
    <property type="component" value="Chromosome 4"/>
</dbReference>
<dbReference type="Bgee" id="ENSDARG00000021595">
    <property type="expression patterns" value="Expressed in brain and 8 other cell types or tissues"/>
</dbReference>
<dbReference type="GO" id="GO:0005886">
    <property type="term" value="C:plasma membrane"/>
    <property type="evidence" value="ECO:0000318"/>
    <property type="project" value="GO_Central"/>
</dbReference>
<dbReference type="GO" id="GO:0007605">
    <property type="term" value="P:sensory perception of sound"/>
    <property type="evidence" value="ECO:0000318"/>
    <property type="project" value="GO_Central"/>
</dbReference>
<dbReference type="InterPro" id="IPR019372">
    <property type="entry name" value="LHFPL"/>
</dbReference>
<dbReference type="PANTHER" id="PTHR12489:SF13">
    <property type="entry name" value="LHFPL TETRASPAN SUBFAMILY MEMBER 3 PROTEIN"/>
    <property type="match status" value="1"/>
</dbReference>
<dbReference type="PANTHER" id="PTHR12489">
    <property type="entry name" value="LIPOMA HMGIC FUSION PARTNER-LIKE PROTEIN"/>
    <property type="match status" value="1"/>
</dbReference>
<dbReference type="Pfam" id="PF10242">
    <property type="entry name" value="L_HMGIC_fpl"/>
    <property type="match status" value="1"/>
</dbReference>
<proteinExistence type="evidence at transcript level"/>
<feature type="chain" id="PRO_0000244768" description="LHFPL tetraspan subfamily member 3 protein">
    <location>
        <begin position="1"/>
        <end position="216"/>
    </location>
</feature>
<feature type="transmembrane region" description="Helical" evidence="2">
    <location>
        <begin position="22"/>
        <end position="42"/>
    </location>
</feature>
<feature type="transmembrane region" description="Helical" evidence="2">
    <location>
        <begin position="96"/>
        <end position="116"/>
    </location>
</feature>
<feature type="transmembrane region" description="Helical" evidence="2">
    <location>
        <begin position="126"/>
        <end position="146"/>
    </location>
</feature>
<feature type="transmembrane region" description="Helical" evidence="2">
    <location>
        <begin position="177"/>
        <end position="197"/>
    </location>
</feature>
<comment type="subcellular location">
    <subcellularLocation>
        <location evidence="3">Membrane</location>
        <topology evidence="3">Multi-pass membrane protein</topology>
    </subcellularLocation>
</comment>
<comment type="similarity">
    <text evidence="3">Belongs to the LHFP family.</text>
</comment>
<organism>
    <name type="scientific">Danio rerio</name>
    <name type="common">Zebrafish</name>
    <name type="synonym">Brachydanio rerio</name>
    <dbReference type="NCBI Taxonomy" id="7955"/>
    <lineage>
        <taxon>Eukaryota</taxon>
        <taxon>Metazoa</taxon>
        <taxon>Chordata</taxon>
        <taxon>Craniata</taxon>
        <taxon>Vertebrata</taxon>
        <taxon>Euteleostomi</taxon>
        <taxon>Actinopterygii</taxon>
        <taxon>Neopterygii</taxon>
        <taxon>Teleostei</taxon>
        <taxon>Ostariophysi</taxon>
        <taxon>Cypriniformes</taxon>
        <taxon>Danionidae</taxon>
        <taxon>Danioninae</taxon>
        <taxon>Danio</taxon>
    </lineage>
</organism>
<keyword id="KW-0472">Membrane</keyword>
<keyword id="KW-1185">Reference proteome</keyword>
<keyword id="KW-0812">Transmembrane</keyword>
<keyword id="KW-1133">Transmembrane helix</keyword>
<protein>
    <recommendedName>
        <fullName evidence="1">LHFPL tetraspan subfamily member 3 protein</fullName>
    </recommendedName>
    <alternativeName>
        <fullName evidence="1">Lipoma HMGIC fusion partner-like 3 protein</fullName>
    </alternativeName>
</protein>
<sequence length="216" mass="23499">MLPATEAAKIYQTNYVRNSRAIGVLWAIFTTLFAIVNVVCFVQPYWIGDGMDTPQAGYFGLFHYCIGSGMSRDLTCQGSFTEFGSIPSSAFKAASFFIGMSMVLVLSCIGCFALFFFCSTATVYKICGWMQLAAGTCLVLGCMIYPDGWDADEVKRMCGEGTDKYTIGACSVRWAYILAIMGILDALILSFLAFVLGNRQDGLMSEELLGDKSGNA</sequence>
<accession>Q6DHB5</accession>
<name>LHPL3_DANRE</name>
<gene>
    <name evidence="1" type="primary">lhfpl3</name>
    <name type="ORF">zgc:92534</name>
</gene>
<evidence type="ECO:0000250" key="1">
    <source>
        <dbReference type="UniProtKB" id="Q86UP9"/>
    </source>
</evidence>
<evidence type="ECO:0000255" key="2"/>
<evidence type="ECO:0000305" key="3"/>
<reference key="1">
    <citation type="journal article" date="2013" name="Nature">
        <title>The zebrafish reference genome sequence and its relationship to the human genome.</title>
        <authorList>
            <person name="Howe K."/>
            <person name="Clark M.D."/>
            <person name="Torroja C.F."/>
            <person name="Torrance J."/>
            <person name="Berthelot C."/>
            <person name="Muffato M."/>
            <person name="Collins J.E."/>
            <person name="Humphray S."/>
            <person name="McLaren K."/>
            <person name="Matthews L."/>
            <person name="McLaren S."/>
            <person name="Sealy I."/>
            <person name="Caccamo M."/>
            <person name="Churcher C."/>
            <person name="Scott C."/>
            <person name="Barrett J.C."/>
            <person name="Koch R."/>
            <person name="Rauch G.J."/>
            <person name="White S."/>
            <person name="Chow W."/>
            <person name="Kilian B."/>
            <person name="Quintais L.T."/>
            <person name="Guerra-Assuncao J.A."/>
            <person name="Zhou Y."/>
            <person name="Gu Y."/>
            <person name="Yen J."/>
            <person name="Vogel J.H."/>
            <person name="Eyre T."/>
            <person name="Redmond S."/>
            <person name="Banerjee R."/>
            <person name="Chi J."/>
            <person name="Fu B."/>
            <person name="Langley E."/>
            <person name="Maguire S.F."/>
            <person name="Laird G.K."/>
            <person name="Lloyd D."/>
            <person name="Kenyon E."/>
            <person name="Donaldson S."/>
            <person name="Sehra H."/>
            <person name="Almeida-King J."/>
            <person name="Loveland J."/>
            <person name="Trevanion S."/>
            <person name="Jones M."/>
            <person name="Quail M."/>
            <person name="Willey D."/>
            <person name="Hunt A."/>
            <person name="Burton J."/>
            <person name="Sims S."/>
            <person name="McLay K."/>
            <person name="Plumb B."/>
            <person name="Davis J."/>
            <person name="Clee C."/>
            <person name="Oliver K."/>
            <person name="Clark R."/>
            <person name="Riddle C."/>
            <person name="Elliot D."/>
            <person name="Threadgold G."/>
            <person name="Harden G."/>
            <person name="Ware D."/>
            <person name="Begum S."/>
            <person name="Mortimore B."/>
            <person name="Kerry G."/>
            <person name="Heath P."/>
            <person name="Phillimore B."/>
            <person name="Tracey A."/>
            <person name="Corby N."/>
            <person name="Dunn M."/>
            <person name="Johnson C."/>
            <person name="Wood J."/>
            <person name="Clark S."/>
            <person name="Pelan S."/>
            <person name="Griffiths G."/>
            <person name="Smith M."/>
            <person name="Glithero R."/>
            <person name="Howden P."/>
            <person name="Barker N."/>
            <person name="Lloyd C."/>
            <person name="Stevens C."/>
            <person name="Harley J."/>
            <person name="Holt K."/>
            <person name="Panagiotidis G."/>
            <person name="Lovell J."/>
            <person name="Beasley H."/>
            <person name="Henderson C."/>
            <person name="Gordon D."/>
            <person name="Auger K."/>
            <person name="Wright D."/>
            <person name="Collins J."/>
            <person name="Raisen C."/>
            <person name="Dyer L."/>
            <person name="Leung K."/>
            <person name="Robertson L."/>
            <person name="Ambridge K."/>
            <person name="Leongamornlert D."/>
            <person name="McGuire S."/>
            <person name="Gilderthorp R."/>
            <person name="Griffiths C."/>
            <person name="Manthravadi D."/>
            <person name="Nichol S."/>
            <person name="Barker G."/>
            <person name="Whitehead S."/>
            <person name="Kay M."/>
            <person name="Brown J."/>
            <person name="Murnane C."/>
            <person name="Gray E."/>
            <person name="Humphries M."/>
            <person name="Sycamore N."/>
            <person name="Barker D."/>
            <person name="Saunders D."/>
            <person name="Wallis J."/>
            <person name="Babbage A."/>
            <person name="Hammond S."/>
            <person name="Mashreghi-Mohammadi M."/>
            <person name="Barr L."/>
            <person name="Martin S."/>
            <person name="Wray P."/>
            <person name="Ellington A."/>
            <person name="Matthews N."/>
            <person name="Ellwood M."/>
            <person name="Woodmansey R."/>
            <person name="Clark G."/>
            <person name="Cooper J."/>
            <person name="Tromans A."/>
            <person name="Grafham D."/>
            <person name="Skuce C."/>
            <person name="Pandian R."/>
            <person name="Andrews R."/>
            <person name="Harrison E."/>
            <person name="Kimberley A."/>
            <person name="Garnett J."/>
            <person name="Fosker N."/>
            <person name="Hall R."/>
            <person name="Garner P."/>
            <person name="Kelly D."/>
            <person name="Bird C."/>
            <person name="Palmer S."/>
            <person name="Gehring I."/>
            <person name="Berger A."/>
            <person name="Dooley C.M."/>
            <person name="Ersan-Urun Z."/>
            <person name="Eser C."/>
            <person name="Geiger H."/>
            <person name="Geisler M."/>
            <person name="Karotki L."/>
            <person name="Kirn A."/>
            <person name="Konantz J."/>
            <person name="Konantz M."/>
            <person name="Oberlander M."/>
            <person name="Rudolph-Geiger S."/>
            <person name="Teucke M."/>
            <person name="Lanz C."/>
            <person name="Raddatz G."/>
            <person name="Osoegawa K."/>
            <person name="Zhu B."/>
            <person name="Rapp A."/>
            <person name="Widaa S."/>
            <person name="Langford C."/>
            <person name="Yang F."/>
            <person name="Schuster S.C."/>
            <person name="Carter N.P."/>
            <person name="Harrow J."/>
            <person name="Ning Z."/>
            <person name="Herrero J."/>
            <person name="Searle S.M."/>
            <person name="Enright A."/>
            <person name="Geisler R."/>
            <person name="Plasterk R.H."/>
            <person name="Lee C."/>
            <person name="Westerfield M."/>
            <person name="de Jong P.J."/>
            <person name="Zon L.I."/>
            <person name="Postlethwait J.H."/>
            <person name="Nusslein-Volhard C."/>
            <person name="Hubbard T.J."/>
            <person name="Roest Crollius H."/>
            <person name="Rogers J."/>
            <person name="Stemple D.L."/>
        </authorList>
    </citation>
    <scope>NUCLEOTIDE SEQUENCE [LARGE SCALE GENOMIC DNA]</scope>
    <source>
        <strain>Tuebingen</strain>
    </source>
</reference>
<reference key="2">
    <citation type="submission" date="2004-07" db="EMBL/GenBank/DDBJ databases">
        <authorList>
            <consortium name="NIH - Zebrafish Gene Collection (ZGC) project"/>
        </authorList>
    </citation>
    <scope>NUCLEOTIDE SEQUENCE [LARGE SCALE MRNA]</scope>
</reference>